<gene>
    <name evidence="1" type="primary">hslU</name>
    <name type="ordered locus">TTE1447</name>
</gene>
<proteinExistence type="inferred from homology"/>
<name>HSLU_CALS4</name>
<dbReference type="EMBL" id="AE008691">
    <property type="protein sequence ID" value="AAM24669.1"/>
    <property type="molecule type" value="Genomic_DNA"/>
</dbReference>
<dbReference type="SMR" id="Q8R9Y3"/>
<dbReference type="STRING" id="273068.TTE1447"/>
<dbReference type="KEGG" id="tte:TTE1447"/>
<dbReference type="eggNOG" id="COG1220">
    <property type="taxonomic scope" value="Bacteria"/>
</dbReference>
<dbReference type="HOGENOM" id="CLU_033123_0_0_9"/>
<dbReference type="Proteomes" id="UP000000555">
    <property type="component" value="Chromosome"/>
</dbReference>
<dbReference type="GO" id="GO:0009376">
    <property type="term" value="C:HslUV protease complex"/>
    <property type="evidence" value="ECO:0007669"/>
    <property type="project" value="UniProtKB-UniRule"/>
</dbReference>
<dbReference type="GO" id="GO:0005524">
    <property type="term" value="F:ATP binding"/>
    <property type="evidence" value="ECO:0007669"/>
    <property type="project" value="UniProtKB-UniRule"/>
</dbReference>
<dbReference type="GO" id="GO:0016887">
    <property type="term" value="F:ATP hydrolysis activity"/>
    <property type="evidence" value="ECO:0007669"/>
    <property type="project" value="InterPro"/>
</dbReference>
<dbReference type="GO" id="GO:0008233">
    <property type="term" value="F:peptidase activity"/>
    <property type="evidence" value="ECO:0007669"/>
    <property type="project" value="InterPro"/>
</dbReference>
<dbReference type="GO" id="GO:0036402">
    <property type="term" value="F:proteasome-activating activity"/>
    <property type="evidence" value="ECO:0007669"/>
    <property type="project" value="UniProtKB-UniRule"/>
</dbReference>
<dbReference type="GO" id="GO:0043335">
    <property type="term" value="P:protein unfolding"/>
    <property type="evidence" value="ECO:0007669"/>
    <property type="project" value="UniProtKB-UniRule"/>
</dbReference>
<dbReference type="GO" id="GO:0051603">
    <property type="term" value="P:proteolysis involved in protein catabolic process"/>
    <property type="evidence" value="ECO:0007669"/>
    <property type="project" value="TreeGrafter"/>
</dbReference>
<dbReference type="CDD" id="cd19498">
    <property type="entry name" value="RecA-like_HslU"/>
    <property type="match status" value="1"/>
</dbReference>
<dbReference type="FunFam" id="3.40.50.300:FF:000213">
    <property type="entry name" value="ATP-dependent protease ATPase subunit HslU"/>
    <property type="match status" value="1"/>
</dbReference>
<dbReference type="FunFam" id="3.40.50.300:FF:000220">
    <property type="entry name" value="ATP-dependent protease ATPase subunit HslU"/>
    <property type="match status" value="1"/>
</dbReference>
<dbReference type="Gene3D" id="1.10.8.60">
    <property type="match status" value="1"/>
</dbReference>
<dbReference type="Gene3D" id="1.10.8.10">
    <property type="entry name" value="DNA helicase RuvA subunit, C-terminal domain"/>
    <property type="match status" value="1"/>
</dbReference>
<dbReference type="Gene3D" id="3.40.50.300">
    <property type="entry name" value="P-loop containing nucleotide triphosphate hydrolases"/>
    <property type="match status" value="2"/>
</dbReference>
<dbReference type="HAMAP" id="MF_00249">
    <property type="entry name" value="HslU"/>
    <property type="match status" value="1"/>
</dbReference>
<dbReference type="InterPro" id="IPR003593">
    <property type="entry name" value="AAA+_ATPase"/>
</dbReference>
<dbReference type="InterPro" id="IPR050052">
    <property type="entry name" value="ATP-dep_Clp_protease_ClpX"/>
</dbReference>
<dbReference type="InterPro" id="IPR003959">
    <property type="entry name" value="ATPase_AAA_core"/>
</dbReference>
<dbReference type="InterPro" id="IPR019489">
    <property type="entry name" value="Clp_ATPase_C"/>
</dbReference>
<dbReference type="InterPro" id="IPR004491">
    <property type="entry name" value="HslU"/>
</dbReference>
<dbReference type="InterPro" id="IPR027417">
    <property type="entry name" value="P-loop_NTPase"/>
</dbReference>
<dbReference type="NCBIfam" id="TIGR00390">
    <property type="entry name" value="hslU"/>
    <property type="match status" value="1"/>
</dbReference>
<dbReference type="NCBIfam" id="NF003544">
    <property type="entry name" value="PRK05201.1"/>
    <property type="match status" value="1"/>
</dbReference>
<dbReference type="PANTHER" id="PTHR48102">
    <property type="entry name" value="ATP-DEPENDENT CLP PROTEASE ATP-BINDING SUBUNIT CLPX-LIKE, MITOCHONDRIAL-RELATED"/>
    <property type="match status" value="1"/>
</dbReference>
<dbReference type="PANTHER" id="PTHR48102:SF3">
    <property type="entry name" value="ATP-DEPENDENT PROTEASE ATPASE SUBUNIT HSLU"/>
    <property type="match status" value="1"/>
</dbReference>
<dbReference type="Pfam" id="PF00004">
    <property type="entry name" value="AAA"/>
    <property type="match status" value="1"/>
</dbReference>
<dbReference type="Pfam" id="PF07724">
    <property type="entry name" value="AAA_2"/>
    <property type="match status" value="1"/>
</dbReference>
<dbReference type="Pfam" id="PF10431">
    <property type="entry name" value="ClpB_D2-small"/>
    <property type="match status" value="1"/>
</dbReference>
<dbReference type="SMART" id="SM00382">
    <property type="entry name" value="AAA"/>
    <property type="match status" value="1"/>
</dbReference>
<dbReference type="SMART" id="SM01086">
    <property type="entry name" value="ClpB_D2-small"/>
    <property type="match status" value="1"/>
</dbReference>
<dbReference type="SUPFAM" id="SSF52540">
    <property type="entry name" value="P-loop containing nucleoside triphosphate hydrolases"/>
    <property type="match status" value="1"/>
</dbReference>
<sequence length="461" mass="52624">MRNVKNYTPKEIVAELDKYIVGQKEAKKSVAVALRNRYRRSLLPEDFKEEVTPKNILMVGPTGVGKTEIARRIAKLVEAPFVKVEATKFTEVGYVGRDVDSMVRDLVEAAVRMVKEEKLKAVTEKAKKLAEERLIDYLLGKKKKQPKNPFEMIFNYPSSERTEEPDNVDSYKREEIRQRLRSGELDNHMVEIEVTDTTPPMLEMYTNLGAEELNITLQDMFSDLLPKKKKLRKVTVAEAKKILEAEEAQNLIDMDEVIEEAVKRAENDGIIFIDEIDKIASTGYSAGPDVSREGVQRDLLPIIEGCTVMTKYGPVKTDYILFIAAGAFNVAKVSDLIPELQGRFPIRVNLKPLTKEDFVRILKEPKNALTKQYQELLRTEGVEIKYTEEAIETIAEVAYLINQQSEDIGARRLHTVMEKLFEDLSFHAPELSGQEIVITADYVKEQLKDSLNKYEVNKYIL</sequence>
<keyword id="KW-0067">ATP-binding</keyword>
<keyword id="KW-0143">Chaperone</keyword>
<keyword id="KW-0963">Cytoplasm</keyword>
<keyword id="KW-0547">Nucleotide-binding</keyword>
<keyword id="KW-1185">Reference proteome</keyword>
<organism>
    <name type="scientific">Caldanaerobacter subterraneus subsp. tengcongensis (strain DSM 15242 / JCM 11007 / NBRC 100824 / MB4)</name>
    <name type="common">Thermoanaerobacter tengcongensis</name>
    <dbReference type="NCBI Taxonomy" id="273068"/>
    <lineage>
        <taxon>Bacteria</taxon>
        <taxon>Bacillati</taxon>
        <taxon>Bacillota</taxon>
        <taxon>Clostridia</taxon>
        <taxon>Thermoanaerobacterales</taxon>
        <taxon>Thermoanaerobacteraceae</taxon>
        <taxon>Caldanaerobacter</taxon>
    </lineage>
</organism>
<protein>
    <recommendedName>
        <fullName evidence="1">ATP-dependent protease ATPase subunit HslU</fullName>
    </recommendedName>
    <alternativeName>
        <fullName evidence="1">Unfoldase HslU</fullName>
    </alternativeName>
</protein>
<comment type="function">
    <text evidence="1">ATPase subunit of a proteasome-like degradation complex; this subunit has chaperone activity. The binding of ATP and its subsequent hydrolysis by HslU are essential for unfolding of protein substrates subsequently hydrolyzed by HslV. HslU recognizes the N-terminal part of its protein substrates and unfolds these before they are guided to HslV for hydrolysis.</text>
</comment>
<comment type="subunit">
    <text evidence="1">A double ring-shaped homohexamer of HslV is capped on each side by a ring-shaped HslU homohexamer. The assembly of the HslU/HslV complex is dependent on binding of ATP.</text>
</comment>
<comment type="subcellular location">
    <subcellularLocation>
        <location evidence="1">Cytoplasm</location>
    </subcellularLocation>
</comment>
<comment type="similarity">
    <text evidence="1">Belongs to the ClpX chaperone family. HslU subfamily.</text>
</comment>
<evidence type="ECO:0000255" key="1">
    <source>
        <dbReference type="HAMAP-Rule" id="MF_00249"/>
    </source>
</evidence>
<reference key="1">
    <citation type="journal article" date="2002" name="Genome Res.">
        <title>A complete sequence of the T. tengcongensis genome.</title>
        <authorList>
            <person name="Bao Q."/>
            <person name="Tian Y."/>
            <person name="Li W."/>
            <person name="Xu Z."/>
            <person name="Xuan Z."/>
            <person name="Hu S."/>
            <person name="Dong W."/>
            <person name="Yang J."/>
            <person name="Chen Y."/>
            <person name="Xue Y."/>
            <person name="Xu Y."/>
            <person name="Lai X."/>
            <person name="Huang L."/>
            <person name="Dong X."/>
            <person name="Ma Y."/>
            <person name="Ling L."/>
            <person name="Tan H."/>
            <person name="Chen R."/>
            <person name="Wang J."/>
            <person name="Yu J."/>
            <person name="Yang H."/>
        </authorList>
    </citation>
    <scope>NUCLEOTIDE SEQUENCE [LARGE SCALE GENOMIC DNA]</scope>
    <source>
        <strain>DSM 15242 / JCM 11007 / NBRC 100824 / MB4</strain>
    </source>
</reference>
<accession>Q8R9Y3</accession>
<feature type="chain" id="PRO_0000160556" description="ATP-dependent protease ATPase subunit HslU">
    <location>
        <begin position="1"/>
        <end position="461"/>
    </location>
</feature>
<feature type="binding site" evidence="1">
    <location>
        <position position="21"/>
    </location>
    <ligand>
        <name>ATP</name>
        <dbReference type="ChEBI" id="CHEBI:30616"/>
    </ligand>
</feature>
<feature type="binding site" evidence="1">
    <location>
        <begin position="63"/>
        <end position="68"/>
    </location>
    <ligand>
        <name>ATP</name>
        <dbReference type="ChEBI" id="CHEBI:30616"/>
    </ligand>
</feature>
<feature type="binding site" evidence="1">
    <location>
        <position position="274"/>
    </location>
    <ligand>
        <name>ATP</name>
        <dbReference type="ChEBI" id="CHEBI:30616"/>
    </ligand>
</feature>
<feature type="binding site" evidence="1">
    <location>
        <position position="339"/>
    </location>
    <ligand>
        <name>ATP</name>
        <dbReference type="ChEBI" id="CHEBI:30616"/>
    </ligand>
</feature>
<feature type="binding site" evidence="1">
    <location>
        <position position="411"/>
    </location>
    <ligand>
        <name>ATP</name>
        <dbReference type="ChEBI" id="CHEBI:30616"/>
    </ligand>
</feature>